<accession>D4B2L8</accession>
<keyword id="KW-0020">Allergen</keyword>
<keyword id="KW-1015">Disulfide bond</keyword>
<keyword id="KW-0256">Endoplasmic reticulum</keyword>
<keyword id="KW-0325">Glycoprotein</keyword>
<keyword id="KW-0413">Isomerase</keyword>
<keyword id="KW-0676">Redox-active center</keyword>
<keyword id="KW-1185">Reference proteome</keyword>
<keyword id="KW-0677">Repeat</keyword>
<keyword id="KW-0732">Signal</keyword>
<proteinExistence type="inferred from homology"/>
<dbReference type="EC" id="5.3.4.1" evidence="1"/>
<dbReference type="EMBL" id="ABSU01000029">
    <property type="protein sequence ID" value="EFE30464.1"/>
    <property type="molecule type" value="Genomic_DNA"/>
</dbReference>
<dbReference type="RefSeq" id="XP_003011104.1">
    <property type="nucleotide sequence ID" value="XM_003011058.1"/>
</dbReference>
<dbReference type="SMR" id="D4B2L8"/>
<dbReference type="STRING" id="663331.D4B2L8"/>
<dbReference type="GeneID" id="9523678"/>
<dbReference type="KEGG" id="abe:ARB_02626"/>
<dbReference type="eggNOG" id="KOG0190">
    <property type="taxonomic scope" value="Eukaryota"/>
</dbReference>
<dbReference type="HOGENOM" id="CLU_025879_5_0_1"/>
<dbReference type="OMA" id="FFGMKKD"/>
<dbReference type="OrthoDB" id="427280at2759"/>
<dbReference type="Proteomes" id="UP000008866">
    <property type="component" value="Unassembled WGS sequence"/>
</dbReference>
<dbReference type="GO" id="GO:0005788">
    <property type="term" value="C:endoplasmic reticulum lumen"/>
    <property type="evidence" value="ECO:0007669"/>
    <property type="project" value="UniProtKB-SubCell"/>
</dbReference>
<dbReference type="GO" id="GO:0003756">
    <property type="term" value="F:protein disulfide isomerase activity"/>
    <property type="evidence" value="ECO:0007669"/>
    <property type="project" value="UniProtKB-EC"/>
</dbReference>
<dbReference type="GO" id="GO:0006457">
    <property type="term" value="P:protein folding"/>
    <property type="evidence" value="ECO:0007669"/>
    <property type="project" value="TreeGrafter"/>
</dbReference>
<dbReference type="GO" id="GO:0034976">
    <property type="term" value="P:response to endoplasmic reticulum stress"/>
    <property type="evidence" value="ECO:0007669"/>
    <property type="project" value="TreeGrafter"/>
</dbReference>
<dbReference type="CDD" id="cd02961">
    <property type="entry name" value="PDI_a_family"/>
    <property type="match status" value="1"/>
</dbReference>
<dbReference type="CDD" id="cd02995">
    <property type="entry name" value="PDI_a_PDI_a'_C"/>
    <property type="match status" value="1"/>
</dbReference>
<dbReference type="CDD" id="cd02982">
    <property type="entry name" value="PDI_b'_family"/>
    <property type="match status" value="1"/>
</dbReference>
<dbReference type="CDD" id="cd02981">
    <property type="entry name" value="PDI_b_family"/>
    <property type="match status" value="1"/>
</dbReference>
<dbReference type="FunFam" id="3.40.30.10:FF:000139">
    <property type="entry name" value="Protein disulfide-isomerase"/>
    <property type="match status" value="1"/>
</dbReference>
<dbReference type="FunFam" id="3.40.30.10:FF:000154">
    <property type="entry name" value="Protein disulfide-isomerase"/>
    <property type="match status" value="1"/>
</dbReference>
<dbReference type="FunFam" id="3.40.30.10:FF:000185">
    <property type="entry name" value="Protein disulfide-isomerase"/>
    <property type="match status" value="1"/>
</dbReference>
<dbReference type="FunFam" id="3.40.30.10:FF:000017">
    <property type="entry name" value="Protein disulfide-isomerase A4"/>
    <property type="match status" value="1"/>
</dbReference>
<dbReference type="Gene3D" id="3.40.30.10">
    <property type="entry name" value="Glutaredoxin"/>
    <property type="match status" value="4"/>
</dbReference>
<dbReference type="InterPro" id="IPR005788">
    <property type="entry name" value="PDI_thioredoxin-like_dom"/>
</dbReference>
<dbReference type="InterPro" id="IPR005792">
    <property type="entry name" value="Prot_disulphide_isomerase"/>
</dbReference>
<dbReference type="InterPro" id="IPR036249">
    <property type="entry name" value="Thioredoxin-like_sf"/>
</dbReference>
<dbReference type="InterPro" id="IPR017937">
    <property type="entry name" value="Thioredoxin_CS"/>
</dbReference>
<dbReference type="InterPro" id="IPR013766">
    <property type="entry name" value="Thioredoxin_domain"/>
</dbReference>
<dbReference type="NCBIfam" id="TIGR01130">
    <property type="entry name" value="ER_PDI_fam"/>
    <property type="match status" value="1"/>
</dbReference>
<dbReference type="NCBIfam" id="TIGR01126">
    <property type="entry name" value="pdi_dom"/>
    <property type="match status" value="2"/>
</dbReference>
<dbReference type="PANTHER" id="PTHR18929">
    <property type="entry name" value="PROTEIN DISULFIDE ISOMERASE"/>
    <property type="match status" value="1"/>
</dbReference>
<dbReference type="PANTHER" id="PTHR18929:SF132">
    <property type="entry name" value="PROTEIN DISULFIDE-ISOMERASE A3"/>
    <property type="match status" value="1"/>
</dbReference>
<dbReference type="Pfam" id="PF00085">
    <property type="entry name" value="Thioredoxin"/>
    <property type="match status" value="2"/>
</dbReference>
<dbReference type="Pfam" id="PF13848">
    <property type="entry name" value="Thioredoxin_6"/>
    <property type="match status" value="1"/>
</dbReference>
<dbReference type="PRINTS" id="PR00421">
    <property type="entry name" value="THIOREDOXIN"/>
</dbReference>
<dbReference type="SUPFAM" id="SSF52833">
    <property type="entry name" value="Thioredoxin-like"/>
    <property type="match status" value="4"/>
</dbReference>
<dbReference type="PROSITE" id="PS00014">
    <property type="entry name" value="ER_TARGET"/>
    <property type="match status" value="1"/>
</dbReference>
<dbReference type="PROSITE" id="PS00194">
    <property type="entry name" value="THIOREDOXIN_1"/>
    <property type="match status" value="2"/>
</dbReference>
<dbReference type="PROSITE" id="PS51352">
    <property type="entry name" value="THIOREDOXIN_2"/>
    <property type="match status" value="2"/>
</dbReference>
<organism>
    <name type="scientific">Arthroderma benhamiae (strain ATCC MYA-4681 / CBS 112371)</name>
    <name type="common">Trichophyton mentagrophytes</name>
    <dbReference type="NCBI Taxonomy" id="663331"/>
    <lineage>
        <taxon>Eukaryota</taxon>
        <taxon>Fungi</taxon>
        <taxon>Dikarya</taxon>
        <taxon>Ascomycota</taxon>
        <taxon>Pezizomycotina</taxon>
        <taxon>Eurotiomycetes</taxon>
        <taxon>Eurotiomycetidae</taxon>
        <taxon>Onygenales</taxon>
        <taxon>Arthrodermataceae</taxon>
        <taxon>Trichophyton</taxon>
    </lineage>
</organism>
<feature type="signal peptide" evidence="2">
    <location>
        <begin position="1"/>
        <end position="22"/>
    </location>
</feature>
<feature type="chain" id="PRO_5001341173" description="Protein disulfide-isomerase" evidence="2">
    <location>
        <begin position="23"/>
        <end position="523"/>
    </location>
</feature>
<feature type="domain" description="Thioredoxin 1" evidence="4">
    <location>
        <begin position="24"/>
        <end position="137"/>
    </location>
</feature>
<feature type="domain" description="Thioredoxin 2" evidence="4">
    <location>
        <begin position="344"/>
        <end position="475"/>
    </location>
</feature>
<feature type="region of interest" description="Disordered" evidence="6">
    <location>
        <begin position="478"/>
        <end position="523"/>
    </location>
</feature>
<feature type="short sequence motif" description="Prevents secretion from ER" evidence="5">
    <location>
        <begin position="520"/>
        <end position="523"/>
    </location>
</feature>
<feature type="compositionally biased region" description="Basic and acidic residues" evidence="6">
    <location>
        <begin position="478"/>
        <end position="502"/>
    </location>
</feature>
<feature type="compositionally biased region" description="Basic and acidic residues" evidence="6">
    <location>
        <begin position="512"/>
        <end position="523"/>
    </location>
</feature>
<feature type="active site" description="Nucleophile" evidence="1">
    <location>
        <position position="59"/>
    </location>
</feature>
<feature type="active site" description="Nucleophile" evidence="1">
    <location>
        <position position="62"/>
    </location>
</feature>
<feature type="site" description="Contributes to redox potential value" evidence="1">
    <location>
        <position position="60"/>
    </location>
</feature>
<feature type="site" description="Contributes to redox potential value" evidence="1">
    <location>
        <position position="61"/>
    </location>
</feature>
<feature type="site" description="Lowers pKa of C-terminal Cys of first active site" evidence="1">
    <location>
        <position position="122"/>
    </location>
</feature>
<feature type="glycosylation site" description="N-linked (GlcNAc...) asparagine" evidence="3">
    <location>
        <position position="170"/>
    </location>
</feature>
<feature type="disulfide bond" description="Redox-active" evidence="4">
    <location>
        <begin position="59"/>
        <end position="62"/>
    </location>
</feature>
<feature type="disulfide bond" description="Redox-active" evidence="4">
    <location>
        <begin position="394"/>
        <end position="397"/>
    </location>
</feature>
<comment type="function">
    <text evidence="1">Participates in the folding of proteins containing disulfide bonds, may be involved in glycosylation, prolyl hydroxylation and triglyceride transfer.</text>
</comment>
<comment type="catalytic activity">
    <reaction evidence="1">
        <text>Catalyzes the rearrangement of -S-S- bonds in proteins.</text>
        <dbReference type="EC" id="5.3.4.1"/>
    </reaction>
</comment>
<comment type="subcellular location">
    <subcellularLocation>
        <location evidence="5">Endoplasmic reticulum lumen</location>
    </subcellularLocation>
</comment>
<comment type="allergen">
    <text evidence="7">May cause an allergic reaction in human.</text>
</comment>
<comment type="similarity">
    <text evidence="7">Belongs to the protein disulfide isomerase family.</text>
</comment>
<reference key="1">
    <citation type="journal article" date="2011" name="Genome Biol.">
        <title>Comparative and functional genomics provide insights into the pathogenicity of dermatophytic fungi.</title>
        <authorList>
            <person name="Burmester A."/>
            <person name="Shelest E."/>
            <person name="Gloeckner G."/>
            <person name="Heddergott C."/>
            <person name="Schindler S."/>
            <person name="Staib P."/>
            <person name="Heidel A."/>
            <person name="Felder M."/>
            <person name="Petzold A."/>
            <person name="Szafranski K."/>
            <person name="Feuermann M."/>
            <person name="Pedruzzi I."/>
            <person name="Priebe S."/>
            <person name="Groth M."/>
            <person name="Winkler R."/>
            <person name="Li W."/>
            <person name="Kniemeyer O."/>
            <person name="Schroeckh V."/>
            <person name="Hertweck C."/>
            <person name="Hube B."/>
            <person name="White T.C."/>
            <person name="Platzer M."/>
            <person name="Guthke R."/>
            <person name="Heitman J."/>
            <person name="Woestemeyer J."/>
            <person name="Zipfel P.F."/>
            <person name="Monod M."/>
            <person name="Brakhage A.A."/>
        </authorList>
    </citation>
    <scope>NUCLEOTIDE SEQUENCE [LARGE SCALE GENOMIC DNA]</scope>
    <source>
        <strain>ATCC MYA-4681 / CBS 112371</strain>
    </source>
</reference>
<gene>
    <name type="ORF">ARB_02626</name>
</gene>
<protein>
    <recommendedName>
        <fullName evidence="1">Protein disulfide-isomerase</fullName>
        <ecNumber evidence="1">5.3.4.1</ecNumber>
    </recommendedName>
    <alternativeName>
        <fullName evidence="7">Allergen Alt a 4 homolog</fullName>
    </alternativeName>
</protein>
<name>PDI_ARTBC</name>
<sequence length="523" mass="57255">MPGVRSLLLALAGVSLAPAVLAADASTDSSDVHALKTDTFKDFIKEHDLVLAEFYAPWCGHCKALAPEYEKAATELKSKNIQLAKVDCTEEADLCQEYGVEGYPTLKVFRGLDSHKPYNGARKSPAITSYMIKQSLPSVSVVTAENFEEVKSLDKVVVVAFIGEDDKETNKTYTALADSMRDDVLFAGTSSAELAKKEGVSLPAVVLYKEFDDRKDVYDGKFEAEALKAFIKSSSTPLVGEVGPETYSGYMSAGIPLAYIFADTAEEREQYASDFKDLAKKLKGKINFATIDSKAFGAHAANLNLIPEKFPAFAIQDTVSNKKYPFDQEKKLTKQDITKFVEGVIAGDIAPSVKSEAVPETNDGPVTVIVAHTYEEIVMNKDKDVLVEFYAPWCGHCKALAPKYDQLGSLYKDNKDFASKVTIAKVDATANDIPDEIQGFPTIKLFPADDKDKPVEYTGSRTIEDLANFVRDNGKHKVDAYDEKKVEKDGSDVTGKPKDAEAPPKPSDAPESEEKADKEHEEL</sequence>
<evidence type="ECO:0000250" key="1">
    <source>
        <dbReference type="UniProtKB" id="P07237"/>
    </source>
</evidence>
<evidence type="ECO:0000255" key="2"/>
<evidence type="ECO:0000255" key="3">
    <source>
        <dbReference type="PROSITE-ProRule" id="PRU00498"/>
    </source>
</evidence>
<evidence type="ECO:0000255" key="4">
    <source>
        <dbReference type="PROSITE-ProRule" id="PRU00691"/>
    </source>
</evidence>
<evidence type="ECO:0000255" key="5">
    <source>
        <dbReference type="PROSITE-ProRule" id="PRU10138"/>
    </source>
</evidence>
<evidence type="ECO:0000256" key="6">
    <source>
        <dbReference type="SAM" id="MobiDB-lite"/>
    </source>
</evidence>
<evidence type="ECO:0000305" key="7"/>